<organism>
    <name type="scientific">Lathyrus odoratus</name>
    <name type="common">Sweet pea</name>
    <dbReference type="NCBI Taxonomy" id="3859"/>
    <lineage>
        <taxon>Eukaryota</taxon>
        <taxon>Viridiplantae</taxon>
        <taxon>Streptophyta</taxon>
        <taxon>Embryophyta</taxon>
        <taxon>Tracheophyta</taxon>
        <taxon>Spermatophyta</taxon>
        <taxon>Magnoliopsida</taxon>
        <taxon>eudicotyledons</taxon>
        <taxon>Gunneridae</taxon>
        <taxon>Pentapetalae</taxon>
        <taxon>rosids</taxon>
        <taxon>fabids</taxon>
        <taxon>Fabales</taxon>
        <taxon>Fabaceae</taxon>
        <taxon>Papilionoideae</taxon>
        <taxon>50 kb inversion clade</taxon>
        <taxon>NPAAA clade</taxon>
        <taxon>Hologalegina</taxon>
        <taxon>IRL clade</taxon>
        <taxon>Fabeae</taxon>
        <taxon>Lathyrus</taxon>
    </lineage>
</organism>
<feature type="chain" id="PRO_0000105105" description="Lectin alpha chain">
    <location>
        <begin position="1"/>
        <end position="54"/>
    </location>
</feature>
<protein>
    <recommendedName>
        <fullName>Lectin alpha chain</fullName>
    </recommendedName>
</protein>
<name>LECA_LATOD</name>
<dbReference type="PIR" id="A03361">
    <property type="entry name" value="LNLDAO"/>
</dbReference>
<dbReference type="GO" id="GO:0030246">
    <property type="term" value="F:carbohydrate binding"/>
    <property type="evidence" value="ECO:0007669"/>
    <property type="project" value="UniProtKB-KW"/>
</dbReference>
<dbReference type="Gene3D" id="2.60.120.200">
    <property type="match status" value="1"/>
</dbReference>
<dbReference type="InterPro" id="IPR013320">
    <property type="entry name" value="ConA-like_dom_sf"/>
</dbReference>
<dbReference type="InterPro" id="IPR000985">
    <property type="entry name" value="Lectin_LegA_CS"/>
</dbReference>
<dbReference type="InterPro" id="IPR001220">
    <property type="entry name" value="Legume_lectin_dom"/>
</dbReference>
<dbReference type="Pfam" id="PF00139">
    <property type="entry name" value="Lectin_legB"/>
    <property type="match status" value="1"/>
</dbReference>
<dbReference type="SUPFAM" id="SSF49899">
    <property type="entry name" value="Concanavalin A-like lectins/glucanases"/>
    <property type="match status" value="1"/>
</dbReference>
<dbReference type="PROSITE" id="PS00308">
    <property type="entry name" value="LECTIN_LEGUME_ALPHA"/>
    <property type="match status" value="1"/>
</dbReference>
<proteinExistence type="evidence at protein level"/>
<accession>P02869</accession>
<evidence type="ECO:0000305" key="1"/>
<keyword id="KW-0903">Direct protein sequencing</keyword>
<keyword id="KW-0430">Lectin</keyword>
<reference key="1">
    <citation type="journal article" date="1983" name="FEBS Lett.">
        <title>The amino acid sequence of the alpha-subunit of a mitogenic lectin from seeds of Lathyrus odoratus.</title>
        <authorList>
            <person name="Sletten K."/>
            <person name="Kolberg J."/>
            <person name="Michaelsen T.E."/>
        </authorList>
    </citation>
    <scope>PROTEIN SEQUENCE</scope>
</reference>
<comment type="subunit">
    <text>Tetramer of two alpha and two beta chains.</text>
</comment>
<comment type="similarity">
    <text evidence="1">Belongs to the leguminous lectin family.</text>
</comment>
<sequence length="54" mass="5823">VTSYTLNEVVPLKDVVPEWVRIGFSATTGAEFAAHEVLSWSFHSELGGTSGSQK</sequence>